<dbReference type="EMBL" id="BA000003">
    <property type="protein sequence ID" value="BAB13054.1"/>
    <property type="molecule type" value="Genomic_DNA"/>
</dbReference>
<dbReference type="RefSeq" id="NP_240168.1">
    <property type="nucleotide sequence ID" value="NC_002528.1"/>
</dbReference>
<dbReference type="RefSeq" id="WP_009874304.1">
    <property type="nucleotide sequence ID" value="NZ_AP036055.1"/>
</dbReference>
<dbReference type="SMR" id="P57431"/>
<dbReference type="STRING" id="563178.BUAP5A_343"/>
<dbReference type="EnsemblBacteria" id="BAB13054">
    <property type="protein sequence ID" value="BAB13054"/>
    <property type="gene ID" value="BAB13054"/>
</dbReference>
<dbReference type="KEGG" id="buc:BU349"/>
<dbReference type="PATRIC" id="fig|107806.10.peg.361"/>
<dbReference type="eggNOG" id="COG0333">
    <property type="taxonomic scope" value="Bacteria"/>
</dbReference>
<dbReference type="HOGENOM" id="CLU_129084_2_1_6"/>
<dbReference type="Proteomes" id="UP000001806">
    <property type="component" value="Chromosome"/>
</dbReference>
<dbReference type="GO" id="GO:0015934">
    <property type="term" value="C:large ribosomal subunit"/>
    <property type="evidence" value="ECO:0007669"/>
    <property type="project" value="InterPro"/>
</dbReference>
<dbReference type="GO" id="GO:0003735">
    <property type="term" value="F:structural constituent of ribosome"/>
    <property type="evidence" value="ECO:0007669"/>
    <property type="project" value="InterPro"/>
</dbReference>
<dbReference type="GO" id="GO:0006412">
    <property type="term" value="P:translation"/>
    <property type="evidence" value="ECO:0007669"/>
    <property type="project" value="UniProtKB-UniRule"/>
</dbReference>
<dbReference type="HAMAP" id="MF_00340">
    <property type="entry name" value="Ribosomal_bL32"/>
    <property type="match status" value="1"/>
</dbReference>
<dbReference type="InterPro" id="IPR002677">
    <property type="entry name" value="Ribosomal_bL32"/>
</dbReference>
<dbReference type="InterPro" id="IPR044957">
    <property type="entry name" value="Ribosomal_bL32_bact"/>
</dbReference>
<dbReference type="InterPro" id="IPR011332">
    <property type="entry name" value="Ribosomal_zn-bd"/>
</dbReference>
<dbReference type="NCBIfam" id="TIGR01031">
    <property type="entry name" value="rpmF_bact"/>
    <property type="match status" value="1"/>
</dbReference>
<dbReference type="PANTHER" id="PTHR35534">
    <property type="entry name" value="50S RIBOSOMAL PROTEIN L32"/>
    <property type="match status" value="1"/>
</dbReference>
<dbReference type="PANTHER" id="PTHR35534:SF1">
    <property type="entry name" value="LARGE RIBOSOMAL SUBUNIT PROTEIN BL32"/>
    <property type="match status" value="1"/>
</dbReference>
<dbReference type="Pfam" id="PF01783">
    <property type="entry name" value="Ribosomal_L32p"/>
    <property type="match status" value="1"/>
</dbReference>
<dbReference type="SUPFAM" id="SSF57829">
    <property type="entry name" value="Zn-binding ribosomal proteins"/>
    <property type="match status" value="1"/>
</dbReference>
<organism>
    <name type="scientific">Buchnera aphidicola subsp. Acyrthosiphon pisum (strain APS)</name>
    <name type="common">Acyrthosiphon pisum symbiotic bacterium</name>
    <dbReference type="NCBI Taxonomy" id="107806"/>
    <lineage>
        <taxon>Bacteria</taxon>
        <taxon>Pseudomonadati</taxon>
        <taxon>Pseudomonadota</taxon>
        <taxon>Gammaproteobacteria</taxon>
        <taxon>Enterobacterales</taxon>
        <taxon>Erwiniaceae</taxon>
        <taxon>Buchnera</taxon>
    </lineage>
</organism>
<proteinExistence type="inferred from homology"/>
<comment type="similarity">
    <text evidence="3">Belongs to the bacterial ribosomal protein bL32 family.</text>
</comment>
<keyword id="KW-1185">Reference proteome</keyword>
<keyword id="KW-0687">Ribonucleoprotein</keyword>
<keyword id="KW-0689">Ribosomal protein</keyword>
<evidence type="ECO:0000250" key="1"/>
<evidence type="ECO:0000256" key="2">
    <source>
        <dbReference type="SAM" id="MobiDB-lite"/>
    </source>
</evidence>
<evidence type="ECO:0000305" key="3"/>
<gene>
    <name type="primary">rpmF</name>
    <name type="ordered locus">BU349</name>
</gene>
<accession>P57431</accession>
<reference key="1">
    <citation type="journal article" date="2000" name="Nature">
        <title>Genome sequence of the endocellular bacterial symbiont of aphids Buchnera sp. APS.</title>
        <authorList>
            <person name="Shigenobu S."/>
            <person name="Watanabe H."/>
            <person name="Hattori M."/>
            <person name="Sakaki Y."/>
            <person name="Ishikawa H."/>
        </authorList>
    </citation>
    <scope>NUCLEOTIDE SEQUENCE [LARGE SCALE GENOMIC DNA]</scope>
    <source>
        <strain>APS</strain>
    </source>
</reference>
<feature type="initiator methionine" description="Removed" evidence="1">
    <location>
        <position position="1"/>
    </location>
</feature>
<feature type="chain" id="PRO_0000172319" description="Large ribosomal subunit protein bL32">
    <location>
        <begin position="2"/>
        <end position="54"/>
    </location>
</feature>
<feature type="region of interest" description="Disordered" evidence="2">
    <location>
        <begin position="1"/>
        <end position="26"/>
    </location>
</feature>
<feature type="compositionally biased region" description="Basic residues" evidence="2">
    <location>
        <begin position="7"/>
        <end position="16"/>
    </location>
</feature>
<name>RL32_BUCAI</name>
<protein>
    <recommendedName>
        <fullName evidence="3">Large ribosomal subunit protein bL32</fullName>
    </recommendedName>
    <alternativeName>
        <fullName>50S ribosomal protein L32</fullName>
    </alternativeName>
</protein>
<sequence length="54" mass="6229">MAVQKNKPTRSKRGMRRSHDSLTAPHLSIDKFSGETHIRHHITNNGYYKGKKVI</sequence>